<comment type="function">
    <text evidence="1">Part of the twin-arginine translocation (Tat) system that transports large folded proteins containing a characteristic twin-arginine motif in their signal peptide across membranes. TatA could form the protein-conducting channel of the Tat system.</text>
</comment>
<comment type="subunit">
    <text evidence="1">The Tat system comprises two distinct complexes: a TatABC complex, containing multiple copies of TatA, TatB and TatC subunits, and a separate TatA complex, containing only TatA subunits. Substrates initially bind to the TatABC complex, which probably triggers association of the separate TatA complex to form the active translocon.</text>
</comment>
<comment type="subcellular location">
    <subcellularLocation>
        <location evidence="1">Cell inner membrane</location>
        <topology evidence="1">Single-pass membrane protein</topology>
    </subcellularLocation>
</comment>
<comment type="similarity">
    <text evidence="1">Belongs to the TatA/E family.</text>
</comment>
<dbReference type="EMBL" id="CP001154">
    <property type="protein sequence ID" value="ACO73190.1"/>
    <property type="molecule type" value="Genomic_DNA"/>
</dbReference>
<dbReference type="RefSeq" id="WP_012695685.1">
    <property type="nucleotide sequence ID" value="NC_012559.1"/>
</dbReference>
<dbReference type="SMR" id="C1DAK9"/>
<dbReference type="STRING" id="557598.LHK_00194"/>
<dbReference type="GeneID" id="75109539"/>
<dbReference type="KEGG" id="lhk:LHK_00194"/>
<dbReference type="eggNOG" id="COG1826">
    <property type="taxonomic scope" value="Bacteria"/>
</dbReference>
<dbReference type="HOGENOM" id="CLU_086034_5_3_4"/>
<dbReference type="Proteomes" id="UP000002010">
    <property type="component" value="Chromosome"/>
</dbReference>
<dbReference type="GO" id="GO:0033281">
    <property type="term" value="C:TAT protein transport complex"/>
    <property type="evidence" value="ECO:0007669"/>
    <property type="project" value="UniProtKB-UniRule"/>
</dbReference>
<dbReference type="GO" id="GO:0008320">
    <property type="term" value="F:protein transmembrane transporter activity"/>
    <property type="evidence" value="ECO:0007669"/>
    <property type="project" value="UniProtKB-UniRule"/>
</dbReference>
<dbReference type="GO" id="GO:0043953">
    <property type="term" value="P:protein transport by the Tat complex"/>
    <property type="evidence" value="ECO:0007669"/>
    <property type="project" value="UniProtKB-UniRule"/>
</dbReference>
<dbReference type="Gene3D" id="1.20.5.3310">
    <property type="match status" value="1"/>
</dbReference>
<dbReference type="HAMAP" id="MF_00236">
    <property type="entry name" value="TatA_E"/>
    <property type="match status" value="1"/>
</dbReference>
<dbReference type="InterPro" id="IPR003369">
    <property type="entry name" value="TatA/B/E"/>
</dbReference>
<dbReference type="InterPro" id="IPR006312">
    <property type="entry name" value="TatA/E"/>
</dbReference>
<dbReference type="NCBIfam" id="NF002813">
    <property type="entry name" value="PRK02958.1"/>
    <property type="match status" value="1"/>
</dbReference>
<dbReference type="NCBIfam" id="TIGR01411">
    <property type="entry name" value="tatAE"/>
    <property type="match status" value="1"/>
</dbReference>
<dbReference type="PANTHER" id="PTHR42982">
    <property type="entry name" value="SEC-INDEPENDENT PROTEIN TRANSLOCASE PROTEIN TATA"/>
    <property type="match status" value="1"/>
</dbReference>
<dbReference type="PANTHER" id="PTHR42982:SF1">
    <property type="entry name" value="SEC-INDEPENDENT PROTEIN TRANSLOCASE PROTEIN TATA"/>
    <property type="match status" value="1"/>
</dbReference>
<dbReference type="Pfam" id="PF02416">
    <property type="entry name" value="TatA_B_E"/>
    <property type="match status" value="1"/>
</dbReference>
<proteinExistence type="inferred from homology"/>
<sequence>MGSFSIWHWVIVLVVVVLIFGTKKLRNVGQDLGGAVKGFKEGMKSEGEDAAQTPPAAQKEGGRVIDAEPADKK</sequence>
<name>TATA_LARHH</name>
<evidence type="ECO:0000255" key="1">
    <source>
        <dbReference type="HAMAP-Rule" id="MF_00236"/>
    </source>
</evidence>
<evidence type="ECO:0000256" key="2">
    <source>
        <dbReference type="SAM" id="MobiDB-lite"/>
    </source>
</evidence>
<gene>
    <name evidence="1" type="primary">tatA</name>
    <name type="ordered locus">LHK_00194</name>
</gene>
<organism>
    <name type="scientific">Laribacter hongkongensis (strain HLHK9)</name>
    <dbReference type="NCBI Taxonomy" id="557598"/>
    <lineage>
        <taxon>Bacteria</taxon>
        <taxon>Pseudomonadati</taxon>
        <taxon>Pseudomonadota</taxon>
        <taxon>Betaproteobacteria</taxon>
        <taxon>Neisseriales</taxon>
        <taxon>Aquaspirillaceae</taxon>
        <taxon>Laribacter</taxon>
    </lineage>
</organism>
<reference key="1">
    <citation type="journal article" date="2009" name="PLoS Genet.">
        <title>The complete genome and proteome of Laribacter hongkongensis reveal potential mechanisms for adaptations to different temperatures and habitats.</title>
        <authorList>
            <person name="Woo P.C.Y."/>
            <person name="Lau S.K.P."/>
            <person name="Tse H."/>
            <person name="Teng J.L.L."/>
            <person name="Curreem S.O."/>
            <person name="Tsang A.K.L."/>
            <person name="Fan R.Y.Y."/>
            <person name="Wong G.K.M."/>
            <person name="Huang Y."/>
            <person name="Loman N.J."/>
            <person name="Snyder L.A.S."/>
            <person name="Cai J.J."/>
            <person name="Huang J.-D."/>
            <person name="Mak W."/>
            <person name="Pallen M.J."/>
            <person name="Lok S."/>
            <person name="Yuen K.-Y."/>
        </authorList>
    </citation>
    <scope>NUCLEOTIDE SEQUENCE [LARGE SCALE GENOMIC DNA]</scope>
    <source>
        <strain>HLHK9</strain>
    </source>
</reference>
<keyword id="KW-0997">Cell inner membrane</keyword>
<keyword id="KW-1003">Cell membrane</keyword>
<keyword id="KW-0472">Membrane</keyword>
<keyword id="KW-0653">Protein transport</keyword>
<keyword id="KW-1185">Reference proteome</keyword>
<keyword id="KW-0811">Translocation</keyword>
<keyword id="KW-0812">Transmembrane</keyword>
<keyword id="KW-1133">Transmembrane helix</keyword>
<keyword id="KW-0813">Transport</keyword>
<protein>
    <recommendedName>
        <fullName evidence="1">Sec-independent protein translocase protein TatA</fullName>
    </recommendedName>
</protein>
<accession>C1DAK9</accession>
<feature type="chain" id="PRO_1000197876" description="Sec-independent protein translocase protein TatA">
    <location>
        <begin position="1"/>
        <end position="73"/>
    </location>
</feature>
<feature type="transmembrane region" description="Helical" evidence="1">
    <location>
        <begin position="1"/>
        <end position="21"/>
    </location>
</feature>
<feature type="region of interest" description="Disordered" evidence="2">
    <location>
        <begin position="43"/>
        <end position="73"/>
    </location>
</feature>
<feature type="compositionally biased region" description="Basic and acidic residues" evidence="2">
    <location>
        <begin position="60"/>
        <end position="73"/>
    </location>
</feature>